<proteinExistence type="evidence at protein level"/>
<organism>
    <name type="scientific">Castanea crenata</name>
    <name type="common">Japanese chestnut</name>
    <dbReference type="NCBI Taxonomy" id="103480"/>
    <lineage>
        <taxon>Eukaryota</taxon>
        <taxon>Viridiplantae</taxon>
        <taxon>Streptophyta</taxon>
        <taxon>Embryophyta</taxon>
        <taxon>Tracheophyta</taxon>
        <taxon>Spermatophyta</taxon>
        <taxon>Magnoliopsida</taxon>
        <taxon>eudicotyledons</taxon>
        <taxon>Gunneridae</taxon>
        <taxon>Pentapetalae</taxon>
        <taxon>rosids</taxon>
        <taxon>fabids</taxon>
        <taxon>Fagales</taxon>
        <taxon>Fagaceae</taxon>
        <taxon>Castanea</taxon>
    </lineage>
</organism>
<comment type="function">
    <text evidence="3 4">D-mannose/D-glucose-binding lectin (PubMed:9779592). Binds N-linked high-mannose-type glycans. Has a preference for smaller (Man(2)-Man(6)) high-mannose-type glycans to larger (Man(7)-Man(9)) ones. Recognizes both alpha1-6 extended and alpha1-3 extended monoantennary glycans. The addition of alpha1-2Man to the Man-alpha1-3Man-beta branch results in a significant loss of affinity, but beta1-2GlcNAc has some affinity. Has less affinity for biantennary glycans, and affinity is very weak for the biantennary complex-type N-glycans with bisecting GlcNAc. No affinity is observed for tri- and tetra-antennary glycans (PubMed:18266762). Has mitogenic and hemagglutinating activities (PubMed:9779592).</text>
</comment>
<comment type="similarity">
    <text evidence="1 5">Belongs to the jacalin lectin family.</text>
</comment>
<protein>
    <recommendedName>
        <fullName>Agglutinin</fullName>
    </recommendedName>
    <alternativeName>
        <fullName>CCA</fullName>
    </alternativeName>
</protein>
<reference key="1">
    <citation type="journal article" date="2000" name="Biochem. Biophys. Res. Commun.">
        <title>Complete amino acid sequence of Japanese chestnut agglutinin.</title>
        <authorList>
            <person name="Nomura K."/>
            <person name="Nakamura S."/>
            <person name="Fujitake M."/>
            <person name="Nakanishi T."/>
        </authorList>
    </citation>
    <scope>PROTEIN SEQUENCE</scope>
    <scope>ACETYLATION AT MET-1</scope>
    <source>
        <strain>cv. Kunimi</strain>
        <tissue>Seed</tissue>
    </source>
</reference>
<reference key="2">
    <citation type="journal article" date="2002" name="J. Biochem.">
        <title>Molecular cloning and expression of the mannose/glucose specific lectin from Castanea crenata cotyledons.</title>
        <authorList>
            <person name="Nakamura S."/>
            <person name="Ikegami A."/>
            <person name="Matsumura Y."/>
            <person name="Nakanishi T."/>
            <person name="Nomura K."/>
        </authorList>
    </citation>
    <scope>NUCLEOTIDE SEQUENCE [MRNA]</scope>
    <source>
        <tissue>Cotyledon</tissue>
    </source>
</reference>
<reference key="3">
    <citation type="journal article" date="1998" name="Phytochemistry">
        <title>Purification and characterization of a mannose/glucose-specific lectin from Castanea crenata.</title>
        <authorList>
            <person name="Nomura K."/>
            <person name="Ashida H."/>
            <person name="Uemura N."/>
            <person name="Kushibe S."/>
            <person name="Ozaki T."/>
            <person name="Yoshida M."/>
        </authorList>
    </citation>
    <scope>FUNCTION</scope>
    <source>
        <strain>cv. Kunimi</strain>
        <tissue>Cotyledon</tissue>
    </source>
</reference>
<reference key="4">
    <citation type="journal article" date="2008" name="FEBS J.">
        <title>Analysis of the sugar-binding specificity of mannose-binding-type Jacalin-related lectins by frontal affinity chromatography--an approach to functional classification.</title>
        <authorList>
            <person name="Nakamura-Tsuruta S."/>
            <person name="Uchiyama N."/>
            <person name="Peumans W.J."/>
            <person name="Van Damme E.J."/>
            <person name="Totani K."/>
            <person name="Ito Y."/>
            <person name="Hirabayashi J."/>
        </authorList>
    </citation>
    <scope>FUNCTION</scope>
    <scope>SUBSTRATE SPECIFICITY</scope>
</reference>
<dbReference type="EMBL" id="AF319617">
    <property type="protein sequence ID" value="AAG40322.1"/>
    <property type="molecule type" value="mRNA"/>
</dbReference>
<dbReference type="PIR" id="JC7806">
    <property type="entry name" value="JC7806"/>
</dbReference>
<dbReference type="SMR" id="P82859"/>
<dbReference type="iPTMnet" id="P82859"/>
<dbReference type="GO" id="GO:0050839">
    <property type="term" value="F:cell adhesion molecule binding"/>
    <property type="evidence" value="ECO:0000314"/>
    <property type="project" value="UniProtKB"/>
</dbReference>
<dbReference type="GO" id="GO:0008061">
    <property type="term" value="F:chitin binding"/>
    <property type="evidence" value="ECO:0007669"/>
    <property type="project" value="UniProtKB-KW"/>
</dbReference>
<dbReference type="GO" id="GO:0005536">
    <property type="term" value="F:D-glucose binding"/>
    <property type="evidence" value="ECO:0000314"/>
    <property type="project" value="UniProtKB"/>
</dbReference>
<dbReference type="GO" id="GO:0005537">
    <property type="term" value="F:D-mannose binding"/>
    <property type="evidence" value="ECO:0000314"/>
    <property type="project" value="UniProtKB"/>
</dbReference>
<dbReference type="GO" id="GO:0070492">
    <property type="term" value="F:oligosaccharide binding"/>
    <property type="evidence" value="ECO:0000314"/>
    <property type="project" value="UniProtKB"/>
</dbReference>
<dbReference type="GO" id="GO:0030247">
    <property type="term" value="F:polysaccharide binding"/>
    <property type="evidence" value="ECO:0000314"/>
    <property type="project" value="UniProtKB"/>
</dbReference>
<dbReference type="GO" id="GO:0007157">
    <property type="term" value="P:heterophilic cell-cell adhesion via plasma membrane cell adhesion molecules"/>
    <property type="evidence" value="ECO:0000314"/>
    <property type="project" value="UniProtKB"/>
</dbReference>
<dbReference type="GO" id="GO:0051781">
    <property type="term" value="P:positive regulation of cell division"/>
    <property type="evidence" value="ECO:0007669"/>
    <property type="project" value="UniProtKB-KW"/>
</dbReference>
<dbReference type="GO" id="GO:0045840">
    <property type="term" value="P:positive regulation of mitotic nuclear division"/>
    <property type="evidence" value="ECO:0000314"/>
    <property type="project" value="UniProtKB"/>
</dbReference>
<dbReference type="CDD" id="cd09612">
    <property type="entry name" value="Jacalin"/>
    <property type="match status" value="2"/>
</dbReference>
<dbReference type="FunFam" id="2.100.10.30:FF:000001">
    <property type="entry name" value="Jacalin-related lectin 33"/>
    <property type="match status" value="2"/>
</dbReference>
<dbReference type="Gene3D" id="2.100.10.30">
    <property type="entry name" value="Jacalin-like lectin domain"/>
    <property type="match status" value="2"/>
</dbReference>
<dbReference type="InterPro" id="IPR001229">
    <property type="entry name" value="Jacalin-like_lectin_dom"/>
</dbReference>
<dbReference type="InterPro" id="IPR033734">
    <property type="entry name" value="Jacalin-like_lectin_dom_plant"/>
</dbReference>
<dbReference type="InterPro" id="IPR036404">
    <property type="entry name" value="Jacalin-like_lectin_dom_sf"/>
</dbReference>
<dbReference type="PANTHER" id="PTHR47293:SF66">
    <property type="entry name" value="JACALIN-RELATED LECTIN 11-RELATED"/>
    <property type="match status" value="1"/>
</dbReference>
<dbReference type="PANTHER" id="PTHR47293">
    <property type="entry name" value="JACALIN-RELATED LECTIN 3"/>
    <property type="match status" value="1"/>
</dbReference>
<dbReference type="Pfam" id="PF01419">
    <property type="entry name" value="Jacalin"/>
    <property type="match status" value="2"/>
</dbReference>
<dbReference type="SMART" id="SM00915">
    <property type="entry name" value="Jacalin"/>
    <property type="match status" value="2"/>
</dbReference>
<dbReference type="SUPFAM" id="SSF51101">
    <property type="entry name" value="Mannose-binding lectins"/>
    <property type="match status" value="2"/>
</dbReference>
<dbReference type="PROSITE" id="PS51752">
    <property type="entry name" value="JACALIN_LECTIN"/>
    <property type="match status" value="2"/>
</dbReference>
<name>LECA_CASCR</name>
<sequence length="309" mass="33383">MEEFLTVGLWGGEGGDRWSFVVNNGGIIGMEIVHANGIASITFKCGDEYGVLQHSRKFGGTGEGWKTDKISLNWPEEYLTSISGTVADLWQHIIIRSISFKTNKGTEYGPYGVVTGQPFSYSTEGGVIVGFHGRSGTLLDAIGAYVKIPQKKDNTLKMALPVPRGPGPWGGHGGMEWDDGVFPAIRELHLYVGDSVIHAIRVSYQSKDGEPLLSPKHGGEGGEPIDPIKLEVSKEFLIRIAGFYGPVEGSGSFKALRSITFYTNKAKYGPYGDEIGQAFTSSVAPGRVVGFHGRSGAYLDAIGVHMEYF</sequence>
<feature type="chain" id="PRO_0000072802" description="Agglutinin">
    <location>
        <begin position="1"/>
        <end position="309"/>
    </location>
</feature>
<feature type="domain" description="Jacalin-type lectin 1" evidence="1">
    <location>
        <begin position="4"/>
        <end position="148"/>
    </location>
</feature>
<feature type="domain" description="Jacalin-type lectin 2" evidence="1">
    <location>
        <begin position="163"/>
        <end position="308"/>
    </location>
</feature>
<feature type="modified residue" description="N-acetylmethionine" evidence="2">
    <location>
        <position position="1"/>
    </location>
</feature>
<evidence type="ECO:0000255" key="1">
    <source>
        <dbReference type="PROSITE-ProRule" id="PRU01088"/>
    </source>
</evidence>
<evidence type="ECO:0000269" key="2">
    <source>
    </source>
</evidence>
<evidence type="ECO:0000269" key="3">
    <source>
    </source>
</evidence>
<evidence type="ECO:0000269" key="4">
    <source>
    </source>
</evidence>
<evidence type="ECO:0000305" key="5"/>
<accession>P82859</accession>
<keyword id="KW-0007">Acetylation</keyword>
<keyword id="KW-0147">Chitin-binding</keyword>
<keyword id="KW-0903">Direct protein sequencing</keyword>
<keyword id="KW-0348">Hemagglutinin</keyword>
<keyword id="KW-0430">Lectin</keyword>
<keyword id="KW-0465">Mannose-binding</keyword>
<keyword id="KW-0497">Mitogen</keyword>
<keyword id="KW-0677">Repeat</keyword>